<accession>Q65MT6</accession>
<name>Y691_BACLD</name>
<protein>
    <recommendedName>
        <fullName evidence="1">UPF0316 protein BLi00691/BL01474</fullName>
    </recommendedName>
</protein>
<gene>
    <name type="ordered locus">BLi00691</name>
    <name type="ordered locus">BL01474</name>
</gene>
<organism>
    <name type="scientific">Bacillus licheniformis (strain ATCC 14580 / DSM 13 / JCM 2505 / CCUG 7422 / NBRC 12200 / NCIMB 9375 / NCTC 10341 / NRRL NRS-1264 / Gibson 46)</name>
    <dbReference type="NCBI Taxonomy" id="279010"/>
    <lineage>
        <taxon>Bacteria</taxon>
        <taxon>Bacillati</taxon>
        <taxon>Bacillota</taxon>
        <taxon>Bacilli</taxon>
        <taxon>Bacillales</taxon>
        <taxon>Bacillaceae</taxon>
        <taxon>Bacillus</taxon>
    </lineage>
</organism>
<comment type="subcellular location">
    <subcellularLocation>
        <location evidence="1">Cell membrane</location>
        <topology evidence="1">Multi-pass membrane protein</topology>
    </subcellularLocation>
</comment>
<comment type="similarity">
    <text evidence="1">Belongs to the UPF0316 family.</text>
</comment>
<proteinExistence type="inferred from homology"/>
<reference key="1">
    <citation type="journal article" date="2004" name="J. Mol. Microbiol. Biotechnol.">
        <title>The complete genome sequence of Bacillus licheniformis DSM13, an organism with great industrial potential.</title>
        <authorList>
            <person name="Veith B."/>
            <person name="Herzberg C."/>
            <person name="Steckel S."/>
            <person name="Feesche J."/>
            <person name="Maurer K.H."/>
            <person name="Ehrenreich P."/>
            <person name="Baeumer S."/>
            <person name="Henne A."/>
            <person name="Liesegang H."/>
            <person name="Merkl R."/>
            <person name="Ehrenreich A."/>
            <person name="Gottschalk G."/>
        </authorList>
    </citation>
    <scope>NUCLEOTIDE SEQUENCE [LARGE SCALE GENOMIC DNA]</scope>
    <source>
        <strain>ATCC 14580 / DSM 13 / JCM 2505 / CCUG 7422 / NBRC 12200 / NCIMB 9375 / NCTC 10341 / NRRL NRS-1264 / Gibson 46</strain>
    </source>
</reference>
<reference key="2">
    <citation type="journal article" date="2004" name="Genome Biol.">
        <title>Complete genome sequence of the industrial bacterium Bacillus licheniformis and comparisons with closely related Bacillus species.</title>
        <authorList>
            <person name="Rey M.W."/>
            <person name="Ramaiya P."/>
            <person name="Nelson B.A."/>
            <person name="Brody-Karpin S.D."/>
            <person name="Zaretsky E.J."/>
            <person name="Tang M."/>
            <person name="Lopez de Leon A."/>
            <person name="Xiang H."/>
            <person name="Gusti V."/>
            <person name="Clausen I.G."/>
            <person name="Olsen P.B."/>
            <person name="Rasmussen M.D."/>
            <person name="Andersen J.T."/>
            <person name="Joergensen P.L."/>
            <person name="Larsen T.S."/>
            <person name="Sorokin A."/>
            <person name="Bolotin A."/>
            <person name="Lapidus A."/>
            <person name="Galleron N."/>
            <person name="Ehrlich S.D."/>
            <person name="Berka R.M."/>
        </authorList>
    </citation>
    <scope>NUCLEOTIDE SEQUENCE [LARGE SCALE GENOMIC DNA]</scope>
    <source>
        <strain>ATCC 14580 / DSM 13 / JCM 2505 / CCUG 7422 / NBRC 12200 / NCIMB 9375 / NCTC 10341 / NRRL NRS-1264 / Gibson 46</strain>
    </source>
</reference>
<sequence length="184" mass="20578">MLHSALLNGVIMVGIILVINIIYVTFLTLRMILTLKGQRYLAAFIGTIEMLVYVVGLGLVLDNLNQIQNVIAYAVGFGIGIIVGTKIEEKLALGYITVNAITKELDLDLPKQLREKGYGVTHWVVGGLEGDRTAMQILTPRKYELQLYETIKSIDSKAFIISYEPKTIHGGFWVKAVKKRRIKE</sequence>
<keyword id="KW-1003">Cell membrane</keyword>
<keyword id="KW-0472">Membrane</keyword>
<keyword id="KW-1185">Reference proteome</keyword>
<keyword id="KW-0812">Transmembrane</keyword>
<keyword id="KW-1133">Transmembrane helix</keyword>
<dbReference type="EMBL" id="AE017333">
    <property type="protein sequence ID" value="AAU39628.1"/>
    <property type="molecule type" value="Genomic_DNA"/>
</dbReference>
<dbReference type="EMBL" id="CP000002">
    <property type="protein sequence ID" value="AAU22277.1"/>
    <property type="molecule type" value="Genomic_DNA"/>
</dbReference>
<dbReference type="SMR" id="Q65MT6"/>
<dbReference type="STRING" id="279010.BL01474"/>
<dbReference type="KEGG" id="bld:BLi00691"/>
<dbReference type="KEGG" id="bli:BL01474"/>
<dbReference type="eggNOG" id="COG4843">
    <property type="taxonomic scope" value="Bacteria"/>
</dbReference>
<dbReference type="HOGENOM" id="CLU_106166_1_0_9"/>
<dbReference type="Proteomes" id="UP000000606">
    <property type="component" value="Chromosome"/>
</dbReference>
<dbReference type="Bgee" id="BL01474">
    <property type="expression patterns" value="Expressed in primary dorsal nerve cord and 12 other cell types or tissues"/>
</dbReference>
<dbReference type="GO" id="GO:0005886">
    <property type="term" value="C:plasma membrane"/>
    <property type="evidence" value="ECO:0007669"/>
    <property type="project" value="UniProtKB-SubCell"/>
</dbReference>
<dbReference type="CDD" id="cd16381">
    <property type="entry name" value="YitT_C_like_1"/>
    <property type="match status" value="1"/>
</dbReference>
<dbReference type="HAMAP" id="MF_01515">
    <property type="entry name" value="UPF0316"/>
    <property type="match status" value="1"/>
</dbReference>
<dbReference type="InterPro" id="IPR019264">
    <property type="entry name" value="DUF2179"/>
</dbReference>
<dbReference type="InterPro" id="IPR044035">
    <property type="entry name" value="DUF5698"/>
</dbReference>
<dbReference type="InterPro" id="IPR022930">
    <property type="entry name" value="UPF0316"/>
</dbReference>
<dbReference type="NCBIfam" id="NF003194">
    <property type="entry name" value="PRK04164.1-5"/>
    <property type="match status" value="1"/>
</dbReference>
<dbReference type="PANTHER" id="PTHR40060">
    <property type="entry name" value="UPF0316 PROTEIN YEBE"/>
    <property type="match status" value="1"/>
</dbReference>
<dbReference type="PANTHER" id="PTHR40060:SF1">
    <property type="entry name" value="UPF0316 PROTEIN YEBE"/>
    <property type="match status" value="1"/>
</dbReference>
<dbReference type="Pfam" id="PF10035">
    <property type="entry name" value="DUF2179"/>
    <property type="match status" value="1"/>
</dbReference>
<dbReference type="Pfam" id="PF18955">
    <property type="entry name" value="DUF5698"/>
    <property type="match status" value="1"/>
</dbReference>
<feature type="chain" id="PRO_0000171938" description="UPF0316 protein BLi00691/BL01474">
    <location>
        <begin position="1"/>
        <end position="184"/>
    </location>
</feature>
<feature type="transmembrane region" description="Helical" evidence="1">
    <location>
        <begin position="9"/>
        <end position="29"/>
    </location>
</feature>
<feature type="transmembrane region" description="Helical" evidence="1">
    <location>
        <begin position="41"/>
        <end position="61"/>
    </location>
</feature>
<feature type="transmembrane region" description="Helical" evidence="1">
    <location>
        <begin position="67"/>
        <end position="87"/>
    </location>
</feature>
<evidence type="ECO:0000255" key="1">
    <source>
        <dbReference type="HAMAP-Rule" id="MF_01515"/>
    </source>
</evidence>